<proteinExistence type="inferred from homology"/>
<name>EFTU_NITV2</name>
<comment type="function">
    <text evidence="2">GTP hydrolase that promotes the GTP-dependent binding of aminoacyl-tRNA to the A-site of ribosomes during protein biosynthesis.</text>
</comment>
<comment type="catalytic activity">
    <reaction evidence="2">
        <text>GTP + H2O = GDP + phosphate + H(+)</text>
        <dbReference type="Rhea" id="RHEA:19669"/>
        <dbReference type="ChEBI" id="CHEBI:15377"/>
        <dbReference type="ChEBI" id="CHEBI:15378"/>
        <dbReference type="ChEBI" id="CHEBI:37565"/>
        <dbReference type="ChEBI" id="CHEBI:43474"/>
        <dbReference type="ChEBI" id="CHEBI:58189"/>
        <dbReference type="EC" id="3.6.5.3"/>
    </reaction>
    <physiologicalReaction direction="left-to-right" evidence="2">
        <dbReference type="Rhea" id="RHEA:19670"/>
    </physiologicalReaction>
</comment>
<comment type="subunit">
    <text evidence="2">Monomer.</text>
</comment>
<comment type="subcellular location">
    <subcellularLocation>
        <location evidence="2">Cytoplasm</location>
    </subcellularLocation>
</comment>
<comment type="similarity">
    <text evidence="2">Belongs to the TRAFAC class translation factor GTPase superfamily. Classic translation factor GTPase family. EF-Tu/EF-1A subfamily.</text>
</comment>
<evidence type="ECO:0000250" key="1"/>
<evidence type="ECO:0000255" key="2">
    <source>
        <dbReference type="HAMAP-Rule" id="MF_00118"/>
    </source>
</evidence>
<organism>
    <name type="scientific">Nitratidesulfovibrio vulgaris (strain ATCC 29579 / DSM 644 / CCUG 34227 / NCIMB 8303 / VKM B-1760 / Hildenborough)</name>
    <name type="common">Desulfovibrio vulgaris</name>
    <dbReference type="NCBI Taxonomy" id="882"/>
    <lineage>
        <taxon>Bacteria</taxon>
        <taxon>Pseudomonadati</taxon>
        <taxon>Thermodesulfobacteriota</taxon>
        <taxon>Desulfovibrionia</taxon>
        <taxon>Desulfovibrionales</taxon>
        <taxon>Desulfovibrionaceae</taxon>
        <taxon>Nitratidesulfovibrio</taxon>
    </lineage>
</organism>
<dbReference type="EC" id="3.6.5.3" evidence="2"/>
<dbReference type="EMBL" id="AE017285">
    <property type="protein sequence ID" value="AAS97392.1"/>
    <property type="molecule type" value="Genomic_DNA"/>
</dbReference>
<dbReference type="RefSeq" id="WP_010940180.1">
    <property type="nucleotide sequence ID" value="NC_002937.3"/>
</dbReference>
<dbReference type="RefSeq" id="YP_012132.1">
    <property type="nucleotide sequence ID" value="NC_002937.3"/>
</dbReference>
<dbReference type="SMR" id="Q727D5"/>
<dbReference type="IntAct" id="Q727D5">
    <property type="interactions" value="1"/>
</dbReference>
<dbReference type="STRING" id="882.DVU_2920"/>
<dbReference type="PaxDb" id="882-DVU_2920"/>
<dbReference type="EnsemblBacteria" id="AAS97392">
    <property type="protein sequence ID" value="AAS97392"/>
    <property type="gene ID" value="DVU_2920"/>
</dbReference>
<dbReference type="KEGG" id="dvu:DVU_2920"/>
<dbReference type="PATRIC" id="fig|882.5.peg.2639"/>
<dbReference type="eggNOG" id="COG0050">
    <property type="taxonomic scope" value="Bacteria"/>
</dbReference>
<dbReference type="HOGENOM" id="CLU_007265_0_0_7"/>
<dbReference type="OrthoDB" id="9803139at2"/>
<dbReference type="PhylomeDB" id="Q727D5"/>
<dbReference type="Proteomes" id="UP000002194">
    <property type="component" value="Chromosome"/>
</dbReference>
<dbReference type="GO" id="GO:0005829">
    <property type="term" value="C:cytosol"/>
    <property type="evidence" value="ECO:0007669"/>
    <property type="project" value="TreeGrafter"/>
</dbReference>
<dbReference type="GO" id="GO:0005525">
    <property type="term" value="F:GTP binding"/>
    <property type="evidence" value="ECO:0007669"/>
    <property type="project" value="UniProtKB-UniRule"/>
</dbReference>
<dbReference type="GO" id="GO:0003924">
    <property type="term" value="F:GTPase activity"/>
    <property type="evidence" value="ECO:0007669"/>
    <property type="project" value="InterPro"/>
</dbReference>
<dbReference type="GO" id="GO:0003746">
    <property type="term" value="F:translation elongation factor activity"/>
    <property type="evidence" value="ECO:0007669"/>
    <property type="project" value="UniProtKB-UniRule"/>
</dbReference>
<dbReference type="CDD" id="cd01884">
    <property type="entry name" value="EF_Tu"/>
    <property type="match status" value="1"/>
</dbReference>
<dbReference type="CDD" id="cd03697">
    <property type="entry name" value="EFTU_II"/>
    <property type="match status" value="1"/>
</dbReference>
<dbReference type="CDD" id="cd03707">
    <property type="entry name" value="EFTU_III"/>
    <property type="match status" value="1"/>
</dbReference>
<dbReference type="FunFam" id="2.40.30.10:FF:000001">
    <property type="entry name" value="Elongation factor Tu"/>
    <property type="match status" value="1"/>
</dbReference>
<dbReference type="FunFam" id="3.40.50.300:FF:000003">
    <property type="entry name" value="Elongation factor Tu"/>
    <property type="match status" value="1"/>
</dbReference>
<dbReference type="Gene3D" id="3.40.50.300">
    <property type="entry name" value="P-loop containing nucleotide triphosphate hydrolases"/>
    <property type="match status" value="1"/>
</dbReference>
<dbReference type="Gene3D" id="2.40.30.10">
    <property type="entry name" value="Translation factors"/>
    <property type="match status" value="2"/>
</dbReference>
<dbReference type="HAMAP" id="MF_00118_B">
    <property type="entry name" value="EF_Tu_B"/>
    <property type="match status" value="1"/>
</dbReference>
<dbReference type="InterPro" id="IPR041709">
    <property type="entry name" value="EF-Tu_GTP-bd"/>
</dbReference>
<dbReference type="InterPro" id="IPR050055">
    <property type="entry name" value="EF-Tu_GTPase"/>
</dbReference>
<dbReference type="InterPro" id="IPR004161">
    <property type="entry name" value="EFTu-like_2"/>
</dbReference>
<dbReference type="InterPro" id="IPR033720">
    <property type="entry name" value="EFTU_2"/>
</dbReference>
<dbReference type="InterPro" id="IPR031157">
    <property type="entry name" value="G_TR_CS"/>
</dbReference>
<dbReference type="InterPro" id="IPR027417">
    <property type="entry name" value="P-loop_NTPase"/>
</dbReference>
<dbReference type="InterPro" id="IPR005225">
    <property type="entry name" value="Small_GTP-bd"/>
</dbReference>
<dbReference type="InterPro" id="IPR000795">
    <property type="entry name" value="T_Tr_GTP-bd_dom"/>
</dbReference>
<dbReference type="InterPro" id="IPR009000">
    <property type="entry name" value="Transl_B-barrel_sf"/>
</dbReference>
<dbReference type="InterPro" id="IPR009001">
    <property type="entry name" value="Transl_elong_EF1A/Init_IF2_C"/>
</dbReference>
<dbReference type="InterPro" id="IPR004541">
    <property type="entry name" value="Transl_elong_EFTu/EF1A_bac/org"/>
</dbReference>
<dbReference type="InterPro" id="IPR004160">
    <property type="entry name" value="Transl_elong_EFTu/EF1A_C"/>
</dbReference>
<dbReference type="NCBIfam" id="TIGR00485">
    <property type="entry name" value="EF-Tu"/>
    <property type="match status" value="1"/>
</dbReference>
<dbReference type="NCBIfam" id="NF000766">
    <property type="entry name" value="PRK00049.1"/>
    <property type="match status" value="1"/>
</dbReference>
<dbReference type="NCBIfam" id="NF009372">
    <property type="entry name" value="PRK12735.1"/>
    <property type="match status" value="1"/>
</dbReference>
<dbReference type="NCBIfam" id="NF009373">
    <property type="entry name" value="PRK12736.1"/>
    <property type="match status" value="1"/>
</dbReference>
<dbReference type="NCBIfam" id="TIGR00231">
    <property type="entry name" value="small_GTP"/>
    <property type="match status" value="1"/>
</dbReference>
<dbReference type="PANTHER" id="PTHR43721:SF22">
    <property type="entry name" value="ELONGATION FACTOR TU, MITOCHONDRIAL"/>
    <property type="match status" value="1"/>
</dbReference>
<dbReference type="PANTHER" id="PTHR43721">
    <property type="entry name" value="ELONGATION FACTOR TU-RELATED"/>
    <property type="match status" value="1"/>
</dbReference>
<dbReference type="Pfam" id="PF00009">
    <property type="entry name" value="GTP_EFTU"/>
    <property type="match status" value="1"/>
</dbReference>
<dbReference type="Pfam" id="PF03144">
    <property type="entry name" value="GTP_EFTU_D2"/>
    <property type="match status" value="1"/>
</dbReference>
<dbReference type="Pfam" id="PF03143">
    <property type="entry name" value="GTP_EFTU_D3"/>
    <property type="match status" value="1"/>
</dbReference>
<dbReference type="PRINTS" id="PR00315">
    <property type="entry name" value="ELONGATNFCT"/>
</dbReference>
<dbReference type="SUPFAM" id="SSF50465">
    <property type="entry name" value="EF-Tu/eEF-1alpha/eIF2-gamma C-terminal domain"/>
    <property type="match status" value="1"/>
</dbReference>
<dbReference type="SUPFAM" id="SSF52540">
    <property type="entry name" value="P-loop containing nucleoside triphosphate hydrolases"/>
    <property type="match status" value="1"/>
</dbReference>
<dbReference type="SUPFAM" id="SSF50447">
    <property type="entry name" value="Translation proteins"/>
    <property type="match status" value="1"/>
</dbReference>
<dbReference type="PROSITE" id="PS00301">
    <property type="entry name" value="G_TR_1"/>
    <property type="match status" value="1"/>
</dbReference>
<dbReference type="PROSITE" id="PS51722">
    <property type="entry name" value="G_TR_2"/>
    <property type="match status" value="1"/>
</dbReference>
<gene>
    <name evidence="2" type="primary">tuf</name>
    <name type="ordered locus">DVU_2920</name>
</gene>
<protein>
    <recommendedName>
        <fullName evidence="2">Elongation factor Tu</fullName>
        <shortName evidence="2">EF-Tu</shortName>
        <ecNumber evidence="2">3.6.5.3</ecNumber>
    </recommendedName>
</protein>
<sequence length="397" mass="43407">MGKEKFERKKPHVNIGTIGHIDHGKTTLTAAITKTAGLLGQGKFIAYDEIDKAPEEKERGITIATAHVEYETATRHYAHVDCPGHADYIKNMITGAAQMDGAIIVVAATDGPMPQTREHILLARQVGVPYIVVFLNKCDMVDDEELLELVELEVRELLTSYGFPGDDVPVVRGSALKALESDDPNSDACKPIRELLAACDSYIPEPQRDIDKPFLMPIEDVFSISGRGTVVTGRVERGVIKVGEEVEIVGIKDTTKSTCTGVEMFRKLLDQGQAGDNIGALLRGVKRDDVERGQVLAAPKSITPHRKFKAEVYVLSKEEGGRHTPFFSGYRPQFYFRTTDITGVITLEEGVEMVMPGDNATFNVELIAPIAMELGLRFAIREGGRTVGAGVVSEIVE</sequence>
<reference key="1">
    <citation type="journal article" date="2004" name="Nat. Biotechnol.">
        <title>The genome sequence of the anaerobic, sulfate-reducing bacterium Desulfovibrio vulgaris Hildenborough.</title>
        <authorList>
            <person name="Heidelberg J.F."/>
            <person name="Seshadri R."/>
            <person name="Haveman S.A."/>
            <person name="Hemme C.L."/>
            <person name="Paulsen I.T."/>
            <person name="Kolonay J.F."/>
            <person name="Eisen J.A."/>
            <person name="Ward N.L."/>
            <person name="Methe B.A."/>
            <person name="Brinkac L.M."/>
            <person name="Daugherty S.C."/>
            <person name="DeBoy R.T."/>
            <person name="Dodson R.J."/>
            <person name="Durkin A.S."/>
            <person name="Madupu R."/>
            <person name="Nelson W.C."/>
            <person name="Sullivan S.A."/>
            <person name="Fouts D.E."/>
            <person name="Haft D.H."/>
            <person name="Selengut J."/>
            <person name="Peterson J.D."/>
            <person name="Davidsen T.M."/>
            <person name="Zafar N."/>
            <person name="Zhou L."/>
            <person name="Radune D."/>
            <person name="Dimitrov G."/>
            <person name="Hance M."/>
            <person name="Tran K."/>
            <person name="Khouri H.M."/>
            <person name="Gill J."/>
            <person name="Utterback T.R."/>
            <person name="Feldblyum T.V."/>
            <person name="Wall J.D."/>
            <person name="Voordouw G."/>
            <person name="Fraser C.M."/>
        </authorList>
    </citation>
    <scope>NUCLEOTIDE SEQUENCE [LARGE SCALE GENOMIC DNA]</scope>
    <source>
        <strain>ATCC 29579 / DSM 644 / CCUG 34227 / NCIMB 8303 / VKM B-1760 / Hildenborough</strain>
    </source>
</reference>
<keyword id="KW-0963">Cytoplasm</keyword>
<keyword id="KW-0251">Elongation factor</keyword>
<keyword id="KW-0342">GTP-binding</keyword>
<keyword id="KW-0378">Hydrolase</keyword>
<keyword id="KW-0460">Magnesium</keyword>
<keyword id="KW-0479">Metal-binding</keyword>
<keyword id="KW-0547">Nucleotide-binding</keyword>
<keyword id="KW-0648">Protein biosynthesis</keyword>
<keyword id="KW-1185">Reference proteome</keyword>
<accession>Q727D5</accession>
<feature type="chain" id="PRO_1000015651" description="Elongation factor Tu">
    <location>
        <begin position="1"/>
        <end position="397"/>
    </location>
</feature>
<feature type="domain" description="tr-type G">
    <location>
        <begin position="10"/>
        <end position="207"/>
    </location>
</feature>
<feature type="region of interest" description="G1" evidence="1">
    <location>
        <begin position="19"/>
        <end position="26"/>
    </location>
</feature>
<feature type="region of interest" description="G2" evidence="1">
    <location>
        <begin position="60"/>
        <end position="64"/>
    </location>
</feature>
<feature type="region of interest" description="G3" evidence="1">
    <location>
        <begin position="81"/>
        <end position="84"/>
    </location>
</feature>
<feature type="region of interest" description="G4" evidence="1">
    <location>
        <begin position="136"/>
        <end position="139"/>
    </location>
</feature>
<feature type="region of interest" description="G5" evidence="1">
    <location>
        <begin position="174"/>
        <end position="176"/>
    </location>
</feature>
<feature type="binding site" evidence="2">
    <location>
        <begin position="19"/>
        <end position="26"/>
    </location>
    <ligand>
        <name>GTP</name>
        <dbReference type="ChEBI" id="CHEBI:37565"/>
    </ligand>
</feature>
<feature type="binding site" evidence="2">
    <location>
        <position position="26"/>
    </location>
    <ligand>
        <name>Mg(2+)</name>
        <dbReference type="ChEBI" id="CHEBI:18420"/>
    </ligand>
</feature>
<feature type="binding site" evidence="2">
    <location>
        <begin position="81"/>
        <end position="85"/>
    </location>
    <ligand>
        <name>GTP</name>
        <dbReference type="ChEBI" id="CHEBI:37565"/>
    </ligand>
</feature>
<feature type="binding site" evidence="2">
    <location>
        <begin position="136"/>
        <end position="139"/>
    </location>
    <ligand>
        <name>GTP</name>
        <dbReference type="ChEBI" id="CHEBI:37565"/>
    </ligand>
</feature>